<organism>
    <name type="scientific">Xylella fastidiosa (strain Temecula1 / ATCC 700964)</name>
    <dbReference type="NCBI Taxonomy" id="183190"/>
    <lineage>
        <taxon>Bacteria</taxon>
        <taxon>Pseudomonadati</taxon>
        <taxon>Pseudomonadota</taxon>
        <taxon>Gammaproteobacteria</taxon>
        <taxon>Lysobacterales</taxon>
        <taxon>Lysobacteraceae</taxon>
        <taxon>Xylella</taxon>
    </lineage>
</organism>
<feature type="chain" id="PRO_0000177103" description="Translational regulator CsrA">
    <location>
        <begin position="1"/>
        <end position="71"/>
    </location>
</feature>
<sequence length="71" mass="7672">MLILTRRSGETLMIGDQVTVTVLGVKGNQVRVGINAPKHVAVHREEIYHRIQRGDELACSSGTRGDSGSSI</sequence>
<protein>
    <recommendedName>
        <fullName evidence="1">Translational regulator CsrA</fullName>
    </recommendedName>
    <alternativeName>
        <fullName evidence="1">Carbon storage regulator</fullName>
    </alternativeName>
</protein>
<dbReference type="EMBL" id="AE009442">
    <property type="protein sequence ID" value="AAO27995.1"/>
    <property type="molecule type" value="Genomic_DNA"/>
</dbReference>
<dbReference type="RefSeq" id="WP_004085529.1">
    <property type="nucleotide sequence ID" value="NC_004556.1"/>
</dbReference>
<dbReference type="SMR" id="P63878"/>
<dbReference type="GeneID" id="93903786"/>
<dbReference type="KEGG" id="xft:PD_0095"/>
<dbReference type="HOGENOM" id="CLU_164837_2_1_6"/>
<dbReference type="Proteomes" id="UP000002516">
    <property type="component" value="Chromosome"/>
</dbReference>
<dbReference type="GO" id="GO:0005829">
    <property type="term" value="C:cytosol"/>
    <property type="evidence" value="ECO:0007669"/>
    <property type="project" value="TreeGrafter"/>
</dbReference>
<dbReference type="GO" id="GO:0048027">
    <property type="term" value="F:mRNA 5'-UTR binding"/>
    <property type="evidence" value="ECO:0007669"/>
    <property type="project" value="UniProtKB-UniRule"/>
</dbReference>
<dbReference type="GO" id="GO:0006402">
    <property type="term" value="P:mRNA catabolic process"/>
    <property type="evidence" value="ECO:0007669"/>
    <property type="project" value="InterPro"/>
</dbReference>
<dbReference type="GO" id="GO:0045947">
    <property type="term" value="P:negative regulation of translational initiation"/>
    <property type="evidence" value="ECO:0007669"/>
    <property type="project" value="UniProtKB-UniRule"/>
</dbReference>
<dbReference type="GO" id="GO:0045948">
    <property type="term" value="P:positive regulation of translational initiation"/>
    <property type="evidence" value="ECO:0007669"/>
    <property type="project" value="UniProtKB-UniRule"/>
</dbReference>
<dbReference type="GO" id="GO:0006109">
    <property type="term" value="P:regulation of carbohydrate metabolic process"/>
    <property type="evidence" value="ECO:0007669"/>
    <property type="project" value="UniProtKB-UniRule"/>
</dbReference>
<dbReference type="FunFam" id="2.60.40.4380:FF:000001">
    <property type="entry name" value="Translational regulator CsrA"/>
    <property type="match status" value="1"/>
</dbReference>
<dbReference type="Gene3D" id="2.60.40.4380">
    <property type="entry name" value="Translational regulator CsrA"/>
    <property type="match status" value="1"/>
</dbReference>
<dbReference type="HAMAP" id="MF_00167">
    <property type="entry name" value="CsrA"/>
    <property type="match status" value="1"/>
</dbReference>
<dbReference type="InterPro" id="IPR003751">
    <property type="entry name" value="CsrA"/>
</dbReference>
<dbReference type="InterPro" id="IPR036107">
    <property type="entry name" value="CsrA_sf"/>
</dbReference>
<dbReference type="NCBIfam" id="TIGR00202">
    <property type="entry name" value="csrA"/>
    <property type="match status" value="1"/>
</dbReference>
<dbReference type="NCBIfam" id="NF002469">
    <property type="entry name" value="PRK01712.1"/>
    <property type="match status" value="1"/>
</dbReference>
<dbReference type="PANTHER" id="PTHR34984">
    <property type="entry name" value="CARBON STORAGE REGULATOR"/>
    <property type="match status" value="1"/>
</dbReference>
<dbReference type="PANTHER" id="PTHR34984:SF1">
    <property type="entry name" value="CARBON STORAGE REGULATOR"/>
    <property type="match status" value="1"/>
</dbReference>
<dbReference type="Pfam" id="PF02599">
    <property type="entry name" value="CsrA"/>
    <property type="match status" value="1"/>
</dbReference>
<dbReference type="SUPFAM" id="SSF117130">
    <property type="entry name" value="CsrA-like"/>
    <property type="match status" value="1"/>
</dbReference>
<reference key="1">
    <citation type="journal article" date="2003" name="J. Bacteriol.">
        <title>Comparative analyses of the complete genome sequences of Pierce's disease and citrus variegated chlorosis strains of Xylella fastidiosa.</title>
        <authorList>
            <person name="Van Sluys M.A."/>
            <person name="de Oliveira M.C."/>
            <person name="Monteiro-Vitorello C.B."/>
            <person name="Miyaki C.Y."/>
            <person name="Furlan L.R."/>
            <person name="Camargo L.E.A."/>
            <person name="da Silva A.C.R."/>
            <person name="Moon D.H."/>
            <person name="Takita M.A."/>
            <person name="Lemos E.G.M."/>
            <person name="Machado M.A."/>
            <person name="Ferro M.I.T."/>
            <person name="da Silva F.R."/>
            <person name="Goldman M.H.S."/>
            <person name="Goldman G.H."/>
            <person name="Lemos M.V.F."/>
            <person name="El-Dorry H."/>
            <person name="Tsai S.M."/>
            <person name="Carrer H."/>
            <person name="Carraro D.M."/>
            <person name="de Oliveira R.C."/>
            <person name="Nunes L.R."/>
            <person name="Siqueira W.J."/>
            <person name="Coutinho L.L."/>
            <person name="Kimura E.T."/>
            <person name="Ferro E.S."/>
            <person name="Harakava R."/>
            <person name="Kuramae E.E."/>
            <person name="Marino C.L."/>
            <person name="Giglioti E."/>
            <person name="Abreu I.L."/>
            <person name="Alves L.M.C."/>
            <person name="do Amaral A.M."/>
            <person name="Baia G.S."/>
            <person name="Blanco S.R."/>
            <person name="Brito M.S."/>
            <person name="Cannavan F.S."/>
            <person name="Celestino A.V."/>
            <person name="da Cunha A.F."/>
            <person name="Fenille R.C."/>
            <person name="Ferro J.A."/>
            <person name="Formighieri E.F."/>
            <person name="Kishi L.T."/>
            <person name="Leoni S.G."/>
            <person name="Oliveira A.R."/>
            <person name="Rosa V.E. Jr."/>
            <person name="Sassaki F.T."/>
            <person name="Sena J.A.D."/>
            <person name="de Souza A.A."/>
            <person name="Truffi D."/>
            <person name="Tsukumo F."/>
            <person name="Yanai G.M."/>
            <person name="Zaros L.G."/>
            <person name="Civerolo E.L."/>
            <person name="Simpson A.J.G."/>
            <person name="Almeida N.F. Jr."/>
            <person name="Setubal J.C."/>
            <person name="Kitajima J.P."/>
        </authorList>
    </citation>
    <scope>NUCLEOTIDE SEQUENCE [LARGE SCALE GENOMIC DNA]</scope>
    <source>
        <strain>Temecula1 / ATCC 700964</strain>
    </source>
</reference>
<keyword id="KW-0010">Activator</keyword>
<keyword id="KW-0963">Cytoplasm</keyword>
<keyword id="KW-1185">Reference proteome</keyword>
<keyword id="KW-0678">Repressor</keyword>
<keyword id="KW-0694">RNA-binding</keyword>
<keyword id="KW-0810">Translation regulation</keyword>
<accession>P63878</accession>
<accession>Q87F42</accession>
<accession>Q9PH21</accession>
<proteinExistence type="inferred from homology"/>
<evidence type="ECO:0000255" key="1">
    <source>
        <dbReference type="HAMAP-Rule" id="MF_00167"/>
    </source>
</evidence>
<comment type="function">
    <text evidence="1">A key translational regulator that binds mRNA to regulate translation initiation and/or mRNA stability. Mediates global changes in gene expression, shifting from rapid growth to stress survival by linking envelope stress, the stringent response and the catabolite repression systems. Usually binds in the 5'-UTR; binding at or near the Shine-Dalgarno sequence prevents ribosome-binding, repressing translation, binding elsewhere in the 5'-UTR can activate translation and/or stabilize the mRNA. Its function is antagonized by small RNA(s).</text>
</comment>
<comment type="subunit">
    <text evidence="1">Homodimer; the beta-strands of each monomer intercalate to form a hydrophobic core, while the alpha-helices form wings that extend away from the core.</text>
</comment>
<comment type="subcellular location">
    <subcellularLocation>
        <location evidence="1">Cytoplasm</location>
    </subcellularLocation>
</comment>
<comment type="similarity">
    <text evidence="1">Belongs to the CsrA/RsmA family.</text>
</comment>
<name>CSRA_XYLFT</name>
<gene>
    <name evidence="1" type="primary">csrA</name>
    <name type="ordered locus">PD_0095</name>
</gene>